<protein>
    <recommendedName>
        <fullName evidence="1">Large ribosomal subunit protein bL17</fullName>
    </recommendedName>
    <alternativeName>
        <fullName evidence="3">50S ribosomal protein L17</fullName>
    </alternativeName>
</protein>
<evidence type="ECO:0000255" key="1">
    <source>
        <dbReference type="HAMAP-Rule" id="MF_01368"/>
    </source>
</evidence>
<evidence type="ECO:0000256" key="2">
    <source>
        <dbReference type="SAM" id="MobiDB-lite"/>
    </source>
</evidence>
<evidence type="ECO:0000305" key="3"/>
<dbReference type="EMBL" id="CP000777">
    <property type="protein sequence ID" value="ABZ94389.1"/>
    <property type="molecule type" value="Genomic_DNA"/>
</dbReference>
<dbReference type="RefSeq" id="WP_012388919.1">
    <property type="nucleotide sequence ID" value="NC_010842.1"/>
</dbReference>
<dbReference type="SMR" id="B0SA19"/>
<dbReference type="KEGG" id="lbf:LBF_1885"/>
<dbReference type="HOGENOM" id="CLU_074407_2_0_12"/>
<dbReference type="GO" id="GO:0022625">
    <property type="term" value="C:cytosolic large ribosomal subunit"/>
    <property type="evidence" value="ECO:0007669"/>
    <property type="project" value="TreeGrafter"/>
</dbReference>
<dbReference type="GO" id="GO:0003735">
    <property type="term" value="F:structural constituent of ribosome"/>
    <property type="evidence" value="ECO:0007669"/>
    <property type="project" value="InterPro"/>
</dbReference>
<dbReference type="GO" id="GO:0006412">
    <property type="term" value="P:translation"/>
    <property type="evidence" value="ECO:0007669"/>
    <property type="project" value="UniProtKB-UniRule"/>
</dbReference>
<dbReference type="Gene3D" id="3.90.1030.10">
    <property type="entry name" value="Ribosomal protein L17"/>
    <property type="match status" value="1"/>
</dbReference>
<dbReference type="HAMAP" id="MF_01368">
    <property type="entry name" value="Ribosomal_bL17"/>
    <property type="match status" value="1"/>
</dbReference>
<dbReference type="InterPro" id="IPR000456">
    <property type="entry name" value="Ribosomal_bL17"/>
</dbReference>
<dbReference type="InterPro" id="IPR036373">
    <property type="entry name" value="Ribosomal_bL17_sf"/>
</dbReference>
<dbReference type="NCBIfam" id="TIGR00059">
    <property type="entry name" value="L17"/>
    <property type="match status" value="1"/>
</dbReference>
<dbReference type="PANTHER" id="PTHR14413:SF16">
    <property type="entry name" value="LARGE RIBOSOMAL SUBUNIT PROTEIN BL17M"/>
    <property type="match status" value="1"/>
</dbReference>
<dbReference type="PANTHER" id="PTHR14413">
    <property type="entry name" value="RIBOSOMAL PROTEIN L17"/>
    <property type="match status" value="1"/>
</dbReference>
<dbReference type="Pfam" id="PF01196">
    <property type="entry name" value="Ribosomal_L17"/>
    <property type="match status" value="1"/>
</dbReference>
<dbReference type="SUPFAM" id="SSF64263">
    <property type="entry name" value="Prokaryotic ribosomal protein L17"/>
    <property type="match status" value="1"/>
</dbReference>
<name>RL17_LEPBA</name>
<reference key="1">
    <citation type="journal article" date="2008" name="PLoS ONE">
        <title>Genome sequence of the saprophyte Leptospira biflexa provides insights into the evolution of Leptospira and the pathogenesis of leptospirosis.</title>
        <authorList>
            <person name="Picardeau M."/>
            <person name="Bulach D.M."/>
            <person name="Bouchier C."/>
            <person name="Zuerner R.L."/>
            <person name="Zidane N."/>
            <person name="Wilson P.J."/>
            <person name="Creno S."/>
            <person name="Kuczek E.S."/>
            <person name="Bommezzadri S."/>
            <person name="Davis J.C."/>
            <person name="McGrath A."/>
            <person name="Johnson M.J."/>
            <person name="Boursaux-Eude C."/>
            <person name="Seemann T."/>
            <person name="Rouy Z."/>
            <person name="Coppel R.L."/>
            <person name="Rood J.I."/>
            <person name="Lajus A."/>
            <person name="Davies J.K."/>
            <person name="Medigue C."/>
            <person name="Adler B."/>
        </authorList>
    </citation>
    <scope>NUCLEOTIDE SEQUENCE [LARGE SCALE GENOMIC DNA]</scope>
    <source>
        <strain>Patoc 1 / Ames</strain>
    </source>
</reference>
<comment type="subunit">
    <text evidence="1">Part of the 50S ribosomal subunit. Contacts protein L32.</text>
</comment>
<comment type="similarity">
    <text evidence="1">Belongs to the bacterial ribosomal protein bL17 family.</text>
</comment>
<proteinExistence type="inferred from homology"/>
<sequence length="172" mass="19783">MNKRNKVKQLNRSADHRKAMIQNMVISLLRHERIESSVAKLKVARSYAERIITRAKRNLDANLANLDEQKKNAAILHNTRYLYSHLGDQEIVTKLLKDLANRYAERVGGYTRIIRLVNRPSDNTAMGILELVDRKTQDELKAEAKAKREEKKPAKKEEKPKKAKKEKAAASN</sequence>
<organism>
    <name type="scientific">Leptospira biflexa serovar Patoc (strain Patoc 1 / Ames)</name>
    <dbReference type="NCBI Taxonomy" id="355278"/>
    <lineage>
        <taxon>Bacteria</taxon>
        <taxon>Pseudomonadati</taxon>
        <taxon>Spirochaetota</taxon>
        <taxon>Spirochaetia</taxon>
        <taxon>Leptospirales</taxon>
        <taxon>Leptospiraceae</taxon>
        <taxon>Leptospira</taxon>
    </lineage>
</organism>
<gene>
    <name evidence="1" type="primary">rplQ</name>
    <name type="ordered locus">LBF_1885</name>
</gene>
<accession>B0SA19</accession>
<feature type="chain" id="PRO_1000144441" description="Large ribosomal subunit protein bL17">
    <location>
        <begin position="1"/>
        <end position="172"/>
    </location>
</feature>
<feature type="region of interest" description="Disordered" evidence="2">
    <location>
        <begin position="140"/>
        <end position="172"/>
    </location>
</feature>
<feature type="compositionally biased region" description="Basic and acidic residues" evidence="2">
    <location>
        <begin position="140"/>
        <end position="160"/>
    </location>
</feature>
<keyword id="KW-0687">Ribonucleoprotein</keyword>
<keyword id="KW-0689">Ribosomal protein</keyword>